<feature type="chain" id="PRO_0000267845" description="Large ribosomal subunit protein bL17">
    <location>
        <begin position="1"/>
        <end position="131"/>
    </location>
</feature>
<sequence>MRHRHGLRKLNRTSSHRLAMLRNMSNSLIEHEVIKTTLPKAKELRKVVEPLITLGKKPSLANRRLAFNRLRDRDSVAKLFDVLGPRFANRPGGYLRILKFGFRVGDNAPMALVELLDRPEVEETENVQEAE</sequence>
<comment type="subunit">
    <text evidence="1">Part of the 50S ribosomal subunit. Contacts protein L32.</text>
</comment>
<comment type="similarity">
    <text evidence="1">Belongs to the bacterial ribosomal protein bL17 family.</text>
</comment>
<reference key="1">
    <citation type="journal article" date="2004" name="Proc. Natl. Acad. Sci. U.S.A.">
        <title>Genomic plasticity of the causative agent of melioidosis, Burkholderia pseudomallei.</title>
        <authorList>
            <person name="Holden M.T.G."/>
            <person name="Titball R.W."/>
            <person name="Peacock S.J."/>
            <person name="Cerdeno-Tarraga A.-M."/>
            <person name="Atkins T."/>
            <person name="Crossman L.C."/>
            <person name="Pitt T."/>
            <person name="Churcher C."/>
            <person name="Mungall K.L."/>
            <person name="Bentley S.D."/>
            <person name="Sebaihia M."/>
            <person name="Thomson N.R."/>
            <person name="Bason N."/>
            <person name="Beacham I.R."/>
            <person name="Brooks K."/>
            <person name="Brown K.A."/>
            <person name="Brown N.F."/>
            <person name="Challis G.L."/>
            <person name="Cherevach I."/>
            <person name="Chillingworth T."/>
            <person name="Cronin A."/>
            <person name="Crossett B."/>
            <person name="Davis P."/>
            <person name="DeShazer D."/>
            <person name="Feltwell T."/>
            <person name="Fraser A."/>
            <person name="Hance Z."/>
            <person name="Hauser H."/>
            <person name="Holroyd S."/>
            <person name="Jagels K."/>
            <person name="Keith K.E."/>
            <person name="Maddison M."/>
            <person name="Moule S."/>
            <person name="Price C."/>
            <person name="Quail M.A."/>
            <person name="Rabbinowitsch E."/>
            <person name="Rutherford K."/>
            <person name="Sanders M."/>
            <person name="Simmonds M."/>
            <person name="Songsivilai S."/>
            <person name="Stevens K."/>
            <person name="Tumapa S."/>
            <person name="Vesaratchavest M."/>
            <person name="Whitehead S."/>
            <person name="Yeats C."/>
            <person name="Barrell B.G."/>
            <person name="Oyston P.C.F."/>
            <person name="Parkhill J."/>
        </authorList>
    </citation>
    <scope>NUCLEOTIDE SEQUENCE [LARGE SCALE GENOMIC DNA]</scope>
    <source>
        <strain>K96243</strain>
    </source>
</reference>
<name>RL17_BURPS</name>
<dbReference type="EMBL" id="BX571965">
    <property type="protein sequence ID" value="CAH37197.1"/>
    <property type="molecule type" value="Genomic_DNA"/>
</dbReference>
<dbReference type="RefSeq" id="WP_004197924.1">
    <property type="nucleotide sequence ID" value="NZ_CP009538.1"/>
</dbReference>
<dbReference type="RefSeq" id="YP_109780.1">
    <property type="nucleotide sequence ID" value="NC_006350.1"/>
</dbReference>
<dbReference type="SMR" id="Q63Q38"/>
<dbReference type="STRING" id="272560.BPSL3186"/>
<dbReference type="GeneID" id="93061805"/>
<dbReference type="KEGG" id="bps:BPSL3186"/>
<dbReference type="PATRIC" id="fig|272560.51.peg.2052"/>
<dbReference type="eggNOG" id="COG0203">
    <property type="taxonomic scope" value="Bacteria"/>
</dbReference>
<dbReference type="Proteomes" id="UP000000605">
    <property type="component" value="Chromosome 1"/>
</dbReference>
<dbReference type="GO" id="GO:0022625">
    <property type="term" value="C:cytosolic large ribosomal subunit"/>
    <property type="evidence" value="ECO:0007669"/>
    <property type="project" value="TreeGrafter"/>
</dbReference>
<dbReference type="GO" id="GO:0003735">
    <property type="term" value="F:structural constituent of ribosome"/>
    <property type="evidence" value="ECO:0007669"/>
    <property type="project" value="InterPro"/>
</dbReference>
<dbReference type="GO" id="GO:0006412">
    <property type="term" value="P:translation"/>
    <property type="evidence" value="ECO:0007669"/>
    <property type="project" value="UniProtKB-UniRule"/>
</dbReference>
<dbReference type="FunFam" id="3.90.1030.10:FF:000001">
    <property type="entry name" value="50S ribosomal protein L17"/>
    <property type="match status" value="1"/>
</dbReference>
<dbReference type="Gene3D" id="3.90.1030.10">
    <property type="entry name" value="Ribosomal protein L17"/>
    <property type="match status" value="1"/>
</dbReference>
<dbReference type="HAMAP" id="MF_01368">
    <property type="entry name" value="Ribosomal_bL17"/>
    <property type="match status" value="1"/>
</dbReference>
<dbReference type="InterPro" id="IPR000456">
    <property type="entry name" value="Ribosomal_bL17"/>
</dbReference>
<dbReference type="InterPro" id="IPR047859">
    <property type="entry name" value="Ribosomal_bL17_CS"/>
</dbReference>
<dbReference type="InterPro" id="IPR036373">
    <property type="entry name" value="Ribosomal_bL17_sf"/>
</dbReference>
<dbReference type="NCBIfam" id="TIGR00059">
    <property type="entry name" value="L17"/>
    <property type="match status" value="1"/>
</dbReference>
<dbReference type="PANTHER" id="PTHR14413:SF16">
    <property type="entry name" value="LARGE RIBOSOMAL SUBUNIT PROTEIN BL17M"/>
    <property type="match status" value="1"/>
</dbReference>
<dbReference type="PANTHER" id="PTHR14413">
    <property type="entry name" value="RIBOSOMAL PROTEIN L17"/>
    <property type="match status" value="1"/>
</dbReference>
<dbReference type="Pfam" id="PF01196">
    <property type="entry name" value="Ribosomal_L17"/>
    <property type="match status" value="1"/>
</dbReference>
<dbReference type="SUPFAM" id="SSF64263">
    <property type="entry name" value="Prokaryotic ribosomal protein L17"/>
    <property type="match status" value="1"/>
</dbReference>
<dbReference type="PROSITE" id="PS01167">
    <property type="entry name" value="RIBOSOMAL_L17"/>
    <property type="match status" value="1"/>
</dbReference>
<protein>
    <recommendedName>
        <fullName evidence="1">Large ribosomal subunit protein bL17</fullName>
    </recommendedName>
    <alternativeName>
        <fullName evidence="2">50S ribosomal protein L17</fullName>
    </alternativeName>
</protein>
<gene>
    <name evidence="1" type="primary">rplQ</name>
    <name type="ordered locus">BPSL3186</name>
</gene>
<organism>
    <name type="scientific">Burkholderia pseudomallei (strain K96243)</name>
    <dbReference type="NCBI Taxonomy" id="272560"/>
    <lineage>
        <taxon>Bacteria</taxon>
        <taxon>Pseudomonadati</taxon>
        <taxon>Pseudomonadota</taxon>
        <taxon>Betaproteobacteria</taxon>
        <taxon>Burkholderiales</taxon>
        <taxon>Burkholderiaceae</taxon>
        <taxon>Burkholderia</taxon>
        <taxon>pseudomallei group</taxon>
    </lineage>
</organism>
<evidence type="ECO:0000255" key="1">
    <source>
        <dbReference type="HAMAP-Rule" id="MF_01368"/>
    </source>
</evidence>
<evidence type="ECO:0000305" key="2"/>
<accession>Q63Q38</accession>
<proteinExistence type="inferred from homology"/>
<keyword id="KW-1185">Reference proteome</keyword>
<keyword id="KW-0687">Ribonucleoprotein</keyword>
<keyword id="KW-0689">Ribosomal protein</keyword>